<feature type="chain" id="PRO_0000205221" description="Arrestin homolog">
    <location>
        <begin position="1"/>
        <end position="407"/>
    </location>
</feature>
<dbReference type="EMBL" id="S57174">
    <property type="protein sequence ID" value="AAB25860.1"/>
    <property type="molecule type" value="mRNA"/>
</dbReference>
<dbReference type="PIR" id="A56607">
    <property type="entry name" value="A56607"/>
</dbReference>
<dbReference type="SMR" id="P32122"/>
<dbReference type="GO" id="GO:0005737">
    <property type="term" value="C:cytoplasm"/>
    <property type="evidence" value="ECO:0007669"/>
    <property type="project" value="TreeGrafter"/>
</dbReference>
<dbReference type="GO" id="GO:0001664">
    <property type="term" value="F:G protein-coupled receptor binding"/>
    <property type="evidence" value="ECO:0007669"/>
    <property type="project" value="TreeGrafter"/>
</dbReference>
<dbReference type="GO" id="GO:0002031">
    <property type="term" value="P:G protein-coupled receptor internalization"/>
    <property type="evidence" value="ECO:0007669"/>
    <property type="project" value="TreeGrafter"/>
</dbReference>
<dbReference type="GO" id="GO:0007165">
    <property type="term" value="P:signal transduction"/>
    <property type="evidence" value="ECO:0007669"/>
    <property type="project" value="InterPro"/>
</dbReference>
<dbReference type="FunFam" id="2.60.40.840:FF:000002">
    <property type="entry name" value="Arrestin 3"/>
    <property type="match status" value="1"/>
</dbReference>
<dbReference type="FunFam" id="2.60.40.640:FF:000020">
    <property type="entry name" value="Arrestin, Arr2"/>
    <property type="match status" value="1"/>
</dbReference>
<dbReference type="Gene3D" id="2.60.40.640">
    <property type="match status" value="1"/>
</dbReference>
<dbReference type="Gene3D" id="2.60.40.840">
    <property type="match status" value="1"/>
</dbReference>
<dbReference type="InterPro" id="IPR000698">
    <property type="entry name" value="Arrestin"/>
</dbReference>
<dbReference type="InterPro" id="IPR014752">
    <property type="entry name" value="Arrestin-like_C"/>
</dbReference>
<dbReference type="InterPro" id="IPR011021">
    <property type="entry name" value="Arrestin-like_N"/>
</dbReference>
<dbReference type="InterPro" id="IPR011022">
    <property type="entry name" value="Arrestin_C-like"/>
</dbReference>
<dbReference type="InterPro" id="IPR017864">
    <property type="entry name" value="Arrestin_CS"/>
</dbReference>
<dbReference type="InterPro" id="IPR014753">
    <property type="entry name" value="Arrestin_N"/>
</dbReference>
<dbReference type="InterPro" id="IPR014756">
    <property type="entry name" value="Ig_E-set"/>
</dbReference>
<dbReference type="PANTHER" id="PTHR11792">
    <property type="entry name" value="ARRESTIN"/>
    <property type="match status" value="1"/>
</dbReference>
<dbReference type="PANTHER" id="PTHR11792:SF23">
    <property type="entry name" value="PHOSRESTIN-1"/>
    <property type="match status" value="1"/>
</dbReference>
<dbReference type="Pfam" id="PF02752">
    <property type="entry name" value="Arrestin_C"/>
    <property type="match status" value="1"/>
</dbReference>
<dbReference type="Pfam" id="PF00339">
    <property type="entry name" value="Arrestin_N"/>
    <property type="match status" value="1"/>
</dbReference>
<dbReference type="PRINTS" id="PR00309">
    <property type="entry name" value="ARRESTIN"/>
</dbReference>
<dbReference type="SMART" id="SM01017">
    <property type="entry name" value="Arrestin_C"/>
    <property type="match status" value="1"/>
</dbReference>
<dbReference type="SUPFAM" id="SSF81296">
    <property type="entry name" value="E set domains"/>
    <property type="match status" value="2"/>
</dbReference>
<dbReference type="PROSITE" id="PS00295">
    <property type="entry name" value="ARRESTINS"/>
    <property type="match status" value="1"/>
</dbReference>
<comment type="similarity">
    <text evidence="1">Belongs to the arrestin family.</text>
</comment>
<reference key="1">
    <citation type="journal article" date="1993" name="Cell. Signal.">
        <title>Arrestin-subtypes in insect antennae.</title>
        <authorList>
            <person name="Raming K."/>
            <person name="Freitag J."/>
            <person name="Krieger J."/>
            <person name="Breer H."/>
        </authorList>
    </citation>
    <scope>NUCLEOTIDE SEQUENCE [MRNA]</scope>
    <source>
        <tissue>Antenna</tissue>
    </source>
</reference>
<organism>
    <name type="scientific">Locusta migratoria</name>
    <name type="common">Migratory locust</name>
    <dbReference type="NCBI Taxonomy" id="7004"/>
    <lineage>
        <taxon>Eukaryota</taxon>
        <taxon>Metazoa</taxon>
        <taxon>Ecdysozoa</taxon>
        <taxon>Arthropoda</taxon>
        <taxon>Hexapoda</taxon>
        <taxon>Insecta</taxon>
        <taxon>Pterygota</taxon>
        <taxon>Neoptera</taxon>
        <taxon>Polyneoptera</taxon>
        <taxon>Orthoptera</taxon>
        <taxon>Caelifera</taxon>
        <taxon>Acrididea</taxon>
        <taxon>Acridomorpha</taxon>
        <taxon>Acridoidea</taxon>
        <taxon>Acrididae</taxon>
        <taxon>Oedipodinae</taxon>
        <taxon>Locusta</taxon>
    </lineage>
</organism>
<name>ARRH_LOCMI</name>
<keyword id="KW-0716">Sensory transduction</keyword>
<sequence length="407" mass="45543">MIPLLFVVYVVAVKVFKKTTPNGKVTVYLGKRDFIDHLDHVDPIDGIVVVDNDYLRGRKVFGQLTTTYRYGREEDEVMGLKFTKEMVLAKEQIVPQTKEKMELTPIQERLMKKLGPNAFPFTFHFPASSPSSVTLQPGDDDQGKPLGVEYSVKTWVGDHAEEKGHKRSAVTLAIKKLQYAPPTRGRRLPSSLVSKGFTFSQGKINLEVTLDREIYYHGEKLAANVIINNNSRKTVKNIKVYVVQHCEVTMVNAQFSRHVASLETREGCPITPGASFTKVFYLVPCAASNKDRYGIALDGYLKDDDVNLASSTLVSEGKNTTDAIGIVISYSLRVKLNCGTLGGELQTDVPFKLLHPAPGTAEREKAQAIKKMKSIERTRYENSCYAADDDDNIVFEDFARLRLNEPE</sequence>
<evidence type="ECO:0000305" key="1"/>
<proteinExistence type="evidence at transcript level"/>
<accession>P32122</accession>
<protein>
    <recommendedName>
        <fullName>Arrestin homolog</fullName>
    </recommendedName>
</protein>